<gene>
    <name evidence="1" type="primary">ackA</name>
    <name type="ordered locus">FMG_0852</name>
</gene>
<dbReference type="EC" id="2.7.2.1" evidence="1"/>
<dbReference type="EMBL" id="AP008971">
    <property type="protein sequence ID" value="BAG08270.1"/>
    <property type="molecule type" value="Genomic_DNA"/>
</dbReference>
<dbReference type="RefSeq" id="WP_002837914.1">
    <property type="nucleotide sequence ID" value="NC_010376.1"/>
</dbReference>
<dbReference type="SMR" id="B0S1N0"/>
<dbReference type="STRING" id="334413.FMG_0852"/>
<dbReference type="KEGG" id="fma:FMG_0852"/>
<dbReference type="eggNOG" id="COG0282">
    <property type="taxonomic scope" value="Bacteria"/>
</dbReference>
<dbReference type="HOGENOM" id="CLU_020352_0_1_9"/>
<dbReference type="UniPathway" id="UPA00340">
    <property type="reaction ID" value="UER00458"/>
</dbReference>
<dbReference type="Proteomes" id="UP000001319">
    <property type="component" value="Chromosome"/>
</dbReference>
<dbReference type="GO" id="GO:0005737">
    <property type="term" value="C:cytoplasm"/>
    <property type="evidence" value="ECO:0007669"/>
    <property type="project" value="UniProtKB-SubCell"/>
</dbReference>
<dbReference type="GO" id="GO:0008776">
    <property type="term" value="F:acetate kinase activity"/>
    <property type="evidence" value="ECO:0007669"/>
    <property type="project" value="UniProtKB-UniRule"/>
</dbReference>
<dbReference type="GO" id="GO:0005524">
    <property type="term" value="F:ATP binding"/>
    <property type="evidence" value="ECO:0007669"/>
    <property type="project" value="UniProtKB-KW"/>
</dbReference>
<dbReference type="GO" id="GO:0000287">
    <property type="term" value="F:magnesium ion binding"/>
    <property type="evidence" value="ECO:0007669"/>
    <property type="project" value="UniProtKB-UniRule"/>
</dbReference>
<dbReference type="GO" id="GO:0006083">
    <property type="term" value="P:acetate metabolic process"/>
    <property type="evidence" value="ECO:0007669"/>
    <property type="project" value="TreeGrafter"/>
</dbReference>
<dbReference type="GO" id="GO:0006085">
    <property type="term" value="P:acetyl-CoA biosynthetic process"/>
    <property type="evidence" value="ECO:0007669"/>
    <property type="project" value="UniProtKB-UniRule"/>
</dbReference>
<dbReference type="CDD" id="cd24010">
    <property type="entry name" value="ASKHA_NBD_AcK_PK"/>
    <property type="match status" value="1"/>
</dbReference>
<dbReference type="Gene3D" id="3.30.420.40">
    <property type="match status" value="2"/>
</dbReference>
<dbReference type="HAMAP" id="MF_00020">
    <property type="entry name" value="Acetate_kinase"/>
    <property type="match status" value="1"/>
</dbReference>
<dbReference type="InterPro" id="IPR004372">
    <property type="entry name" value="Ac/propionate_kinase"/>
</dbReference>
<dbReference type="InterPro" id="IPR000890">
    <property type="entry name" value="Aliphatic_acid_kin_short-chain"/>
</dbReference>
<dbReference type="InterPro" id="IPR023865">
    <property type="entry name" value="Aliphatic_acid_kinase_CS"/>
</dbReference>
<dbReference type="InterPro" id="IPR043129">
    <property type="entry name" value="ATPase_NBD"/>
</dbReference>
<dbReference type="NCBIfam" id="TIGR00016">
    <property type="entry name" value="ackA"/>
    <property type="match status" value="1"/>
</dbReference>
<dbReference type="PANTHER" id="PTHR21060">
    <property type="entry name" value="ACETATE KINASE"/>
    <property type="match status" value="1"/>
</dbReference>
<dbReference type="PANTHER" id="PTHR21060:SF15">
    <property type="entry name" value="ACETATE KINASE-RELATED"/>
    <property type="match status" value="1"/>
</dbReference>
<dbReference type="Pfam" id="PF00871">
    <property type="entry name" value="Acetate_kinase"/>
    <property type="match status" value="1"/>
</dbReference>
<dbReference type="PIRSF" id="PIRSF000722">
    <property type="entry name" value="Acetate_prop_kin"/>
    <property type="match status" value="1"/>
</dbReference>
<dbReference type="PRINTS" id="PR00471">
    <property type="entry name" value="ACETATEKNASE"/>
</dbReference>
<dbReference type="SUPFAM" id="SSF53067">
    <property type="entry name" value="Actin-like ATPase domain"/>
    <property type="match status" value="2"/>
</dbReference>
<dbReference type="PROSITE" id="PS01075">
    <property type="entry name" value="ACETATE_KINASE_1"/>
    <property type="match status" value="1"/>
</dbReference>
<dbReference type="PROSITE" id="PS01076">
    <property type="entry name" value="ACETATE_KINASE_2"/>
    <property type="match status" value="1"/>
</dbReference>
<feature type="chain" id="PRO_1000089974" description="Acetate kinase">
    <location>
        <begin position="1"/>
        <end position="393"/>
    </location>
</feature>
<feature type="active site" description="Proton donor/acceptor" evidence="1">
    <location>
        <position position="147"/>
    </location>
</feature>
<feature type="binding site" evidence="1">
    <location>
        <position position="7"/>
    </location>
    <ligand>
        <name>Mg(2+)</name>
        <dbReference type="ChEBI" id="CHEBI:18420"/>
    </ligand>
</feature>
<feature type="binding site" evidence="1">
    <location>
        <position position="14"/>
    </location>
    <ligand>
        <name>ATP</name>
        <dbReference type="ChEBI" id="CHEBI:30616"/>
    </ligand>
</feature>
<feature type="binding site" evidence="1">
    <location>
        <position position="90"/>
    </location>
    <ligand>
        <name>substrate</name>
    </ligand>
</feature>
<feature type="binding site" evidence="1">
    <location>
        <begin position="205"/>
        <end position="209"/>
    </location>
    <ligand>
        <name>ATP</name>
        <dbReference type="ChEBI" id="CHEBI:30616"/>
    </ligand>
</feature>
<feature type="binding site" evidence="1">
    <location>
        <begin position="280"/>
        <end position="282"/>
    </location>
    <ligand>
        <name>ATP</name>
        <dbReference type="ChEBI" id="CHEBI:30616"/>
    </ligand>
</feature>
<feature type="binding site" evidence="1">
    <location>
        <begin position="328"/>
        <end position="332"/>
    </location>
    <ligand>
        <name>ATP</name>
        <dbReference type="ChEBI" id="CHEBI:30616"/>
    </ligand>
</feature>
<feature type="binding site" evidence="1">
    <location>
        <position position="380"/>
    </location>
    <ligand>
        <name>Mg(2+)</name>
        <dbReference type="ChEBI" id="CHEBI:18420"/>
    </ligand>
</feature>
<feature type="site" description="Transition state stabilizer" evidence="1">
    <location>
        <position position="179"/>
    </location>
</feature>
<feature type="site" description="Transition state stabilizer" evidence="1">
    <location>
        <position position="238"/>
    </location>
</feature>
<protein>
    <recommendedName>
        <fullName evidence="1">Acetate kinase</fullName>
        <ecNumber evidence="1">2.7.2.1</ecNumber>
    </recommendedName>
    <alternativeName>
        <fullName evidence="1">Acetokinase</fullName>
    </alternativeName>
</protein>
<comment type="function">
    <text evidence="1">Catalyzes the formation of acetyl phosphate from acetate and ATP. Can also catalyze the reverse reaction.</text>
</comment>
<comment type="catalytic activity">
    <reaction evidence="1">
        <text>acetate + ATP = acetyl phosphate + ADP</text>
        <dbReference type="Rhea" id="RHEA:11352"/>
        <dbReference type="ChEBI" id="CHEBI:22191"/>
        <dbReference type="ChEBI" id="CHEBI:30089"/>
        <dbReference type="ChEBI" id="CHEBI:30616"/>
        <dbReference type="ChEBI" id="CHEBI:456216"/>
        <dbReference type="EC" id="2.7.2.1"/>
    </reaction>
</comment>
<comment type="cofactor">
    <cofactor evidence="1">
        <name>Mg(2+)</name>
        <dbReference type="ChEBI" id="CHEBI:18420"/>
    </cofactor>
    <cofactor evidence="1">
        <name>Mn(2+)</name>
        <dbReference type="ChEBI" id="CHEBI:29035"/>
    </cofactor>
    <text evidence="1">Mg(2+). Can also accept Mn(2+).</text>
</comment>
<comment type="pathway">
    <text evidence="1">Metabolic intermediate biosynthesis; acetyl-CoA biosynthesis; acetyl-CoA from acetate: step 1/2.</text>
</comment>
<comment type="subunit">
    <text evidence="1">Homodimer.</text>
</comment>
<comment type="subcellular location">
    <subcellularLocation>
        <location evidence="1">Cytoplasm</location>
    </subcellularLocation>
</comment>
<comment type="similarity">
    <text evidence="1">Belongs to the acetokinase family.</text>
</comment>
<name>ACKA_FINM2</name>
<organism>
    <name type="scientific">Finegoldia magna (strain ATCC 29328 / DSM 20472 / WAL 2508)</name>
    <name type="common">Peptostreptococcus magnus</name>
    <dbReference type="NCBI Taxonomy" id="334413"/>
    <lineage>
        <taxon>Bacteria</taxon>
        <taxon>Bacillati</taxon>
        <taxon>Bacillota</taxon>
        <taxon>Tissierellia</taxon>
        <taxon>Tissierellales</taxon>
        <taxon>Peptoniphilaceae</taxon>
        <taxon>Finegoldia</taxon>
    </lineage>
</organism>
<reference key="1">
    <citation type="journal article" date="2008" name="DNA Res.">
        <title>Complete genome sequence of Finegoldia magna, an anaerobic opportunistic pathogen.</title>
        <authorList>
            <person name="Goto T."/>
            <person name="Yamashita A."/>
            <person name="Hirakawa H."/>
            <person name="Matsutani M."/>
            <person name="Todo K."/>
            <person name="Ohshima K."/>
            <person name="Toh H."/>
            <person name="Miyamoto K."/>
            <person name="Kuhara S."/>
            <person name="Hattori M."/>
            <person name="Shimizu T."/>
            <person name="Akimoto S."/>
        </authorList>
    </citation>
    <scope>NUCLEOTIDE SEQUENCE [LARGE SCALE GENOMIC DNA]</scope>
    <source>
        <strain>ATCC 29328 / DSM 20472 / WAL 2508</strain>
    </source>
</reference>
<proteinExistence type="inferred from homology"/>
<sequence length="393" mass="43722">MKVLVINCGSSSLKYQLFDMTDESVLCKGLVERIGIEGSKLTHKVNGEKLVVEEPMKDHTEAINHVFDALLDEKYGVIKSLDEVSAIGHRVLHGGDKLTESCIIDDKVKDKIREFIKFGPLHNPANLMGIEACEKLAPGKKNIAVFDTAFHQTMPAKTFMYAIPYEYYEDYRLRKFGFHGTSHRYITLRTQQLLGKEDINIITVHLGNGSSIAAVKNGKCYDTSMGLTPLEGLLMGTRSGDLDPTVMTFLMNEKGYSADEMNQILNKKSGVLGVSGISSDFRDLEEEAEKGNDRAQLALDMFIERVKRYIGGYMAELGHVDAICFAGGIGENSSSMRKDILDTFEELGVKLDLEKNNTREEALISADDSKVKVYVVPTNEELMIARDTLELAK</sequence>
<evidence type="ECO:0000255" key="1">
    <source>
        <dbReference type="HAMAP-Rule" id="MF_00020"/>
    </source>
</evidence>
<accession>B0S1N0</accession>
<keyword id="KW-0067">ATP-binding</keyword>
<keyword id="KW-0963">Cytoplasm</keyword>
<keyword id="KW-0418">Kinase</keyword>
<keyword id="KW-0460">Magnesium</keyword>
<keyword id="KW-0479">Metal-binding</keyword>
<keyword id="KW-0547">Nucleotide-binding</keyword>
<keyword id="KW-1185">Reference proteome</keyword>
<keyword id="KW-0808">Transferase</keyword>